<protein>
    <recommendedName>
        <fullName evidence="1">Asparagine--tRNA ligase</fullName>
        <ecNumber evidence="1">6.1.1.22</ecNumber>
    </recommendedName>
    <alternativeName>
        <fullName evidence="1">Asparaginyl-tRNA synthetase</fullName>
        <shortName evidence="1">AsnRS</shortName>
    </alternativeName>
</protein>
<gene>
    <name evidence="1" type="primary">asnS</name>
    <name type="ordered locus">Chy400_1550</name>
</gene>
<keyword id="KW-0030">Aminoacyl-tRNA synthetase</keyword>
<keyword id="KW-0067">ATP-binding</keyword>
<keyword id="KW-0963">Cytoplasm</keyword>
<keyword id="KW-0436">Ligase</keyword>
<keyword id="KW-0547">Nucleotide-binding</keyword>
<keyword id="KW-0648">Protein biosynthesis</keyword>
<comment type="catalytic activity">
    <reaction evidence="1">
        <text>tRNA(Asn) + L-asparagine + ATP = L-asparaginyl-tRNA(Asn) + AMP + diphosphate + H(+)</text>
        <dbReference type="Rhea" id="RHEA:11180"/>
        <dbReference type="Rhea" id="RHEA-COMP:9659"/>
        <dbReference type="Rhea" id="RHEA-COMP:9674"/>
        <dbReference type="ChEBI" id="CHEBI:15378"/>
        <dbReference type="ChEBI" id="CHEBI:30616"/>
        <dbReference type="ChEBI" id="CHEBI:33019"/>
        <dbReference type="ChEBI" id="CHEBI:58048"/>
        <dbReference type="ChEBI" id="CHEBI:78442"/>
        <dbReference type="ChEBI" id="CHEBI:78515"/>
        <dbReference type="ChEBI" id="CHEBI:456215"/>
        <dbReference type="EC" id="6.1.1.22"/>
    </reaction>
</comment>
<comment type="subunit">
    <text evidence="1">Homodimer.</text>
</comment>
<comment type="subcellular location">
    <subcellularLocation>
        <location evidence="1">Cytoplasm</location>
    </subcellularLocation>
</comment>
<comment type="similarity">
    <text evidence="1">Belongs to the class-II aminoacyl-tRNA synthetase family.</text>
</comment>
<reference key="1">
    <citation type="submission" date="2009-01" db="EMBL/GenBank/DDBJ databases">
        <title>Complete sequence of Chloroflexus sp. Y-400-fl.</title>
        <authorList>
            <consortium name="US DOE Joint Genome Institute"/>
            <person name="Lucas S."/>
            <person name="Copeland A."/>
            <person name="Lapidus A."/>
            <person name="Glavina del Rio T."/>
            <person name="Dalin E."/>
            <person name="Tice H."/>
            <person name="Bruce D."/>
            <person name="Goodwin L."/>
            <person name="Pitluck S."/>
            <person name="Sims D."/>
            <person name="Kiss H."/>
            <person name="Brettin T."/>
            <person name="Detter J.C."/>
            <person name="Han C."/>
            <person name="Larimer F."/>
            <person name="Land M."/>
            <person name="Hauser L."/>
            <person name="Kyrpides N."/>
            <person name="Ovchinnikova G."/>
            <person name="Bryant D.A."/>
            <person name="Richardson P."/>
        </authorList>
    </citation>
    <scope>NUCLEOTIDE SEQUENCE [LARGE SCALE GENOMIC DNA]</scope>
    <source>
        <strain>ATCC 29364 / DSM 637 / Y-400-fl</strain>
    </source>
</reference>
<sequence>MSLLPTATVATIARYVGQRVTLAGWVYHKTEKGKLIFILLRDGSGTIQCVTFKKNVSEETFATAQSLTQESSCRITGSVRADERAPGGYELDVESIELIGPSHEYPITPKEHGVEFLMAHRHLWVRSAKQHAILRIRAEVIAAAQEWLNEQGFVRFDTPILTATAAEGTTNLFATDYFDLGKAYLAQTGQLYVEAGMMAFGKVYCFGPTFRAEKSKTRRHLTEFWMIEPEVAFADHEDNMRLQEEFVSAIVARVLERRRDDLQTLERDTTLLEQVRPPFPRITYDEAIELIAAHQGEVEGADPLPWGEDFGAPHETLIASKFDRPVFVERFPSAVKAFYMQPDPERPEVALCADLLAPEGYGEIIGGSQRIHDPILLEQRIREHGLRIEDYEWYLDLRRYGTVPHSGFGMGIERVVAWITGTRHIRETIPFPRQLYRIYP</sequence>
<dbReference type="EC" id="6.1.1.22" evidence="1"/>
<dbReference type="EMBL" id="CP001364">
    <property type="protein sequence ID" value="ACM52968.1"/>
    <property type="molecule type" value="Genomic_DNA"/>
</dbReference>
<dbReference type="SMR" id="B9LCU8"/>
<dbReference type="KEGG" id="chl:Chy400_1550"/>
<dbReference type="HOGENOM" id="CLU_004553_2_0_0"/>
<dbReference type="OrthoDB" id="9762036at2"/>
<dbReference type="GO" id="GO:0005737">
    <property type="term" value="C:cytoplasm"/>
    <property type="evidence" value="ECO:0007669"/>
    <property type="project" value="UniProtKB-SubCell"/>
</dbReference>
<dbReference type="GO" id="GO:0004816">
    <property type="term" value="F:asparagine-tRNA ligase activity"/>
    <property type="evidence" value="ECO:0007669"/>
    <property type="project" value="UniProtKB-UniRule"/>
</dbReference>
<dbReference type="GO" id="GO:0005524">
    <property type="term" value="F:ATP binding"/>
    <property type="evidence" value="ECO:0007669"/>
    <property type="project" value="UniProtKB-UniRule"/>
</dbReference>
<dbReference type="GO" id="GO:0003676">
    <property type="term" value="F:nucleic acid binding"/>
    <property type="evidence" value="ECO:0007669"/>
    <property type="project" value="InterPro"/>
</dbReference>
<dbReference type="GO" id="GO:0006421">
    <property type="term" value="P:asparaginyl-tRNA aminoacylation"/>
    <property type="evidence" value="ECO:0007669"/>
    <property type="project" value="UniProtKB-UniRule"/>
</dbReference>
<dbReference type="CDD" id="cd04323">
    <property type="entry name" value="AsnRS_cyto_like_N"/>
    <property type="match status" value="1"/>
</dbReference>
<dbReference type="CDD" id="cd00776">
    <property type="entry name" value="AsxRS_core"/>
    <property type="match status" value="1"/>
</dbReference>
<dbReference type="Gene3D" id="3.30.930.10">
    <property type="entry name" value="Bira Bifunctional Protein, Domain 2"/>
    <property type="match status" value="1"/>
</dbReference>
<dbReference type="Gene3D" id="2.40.50.140">
    <property type="entry name" value="Nucleic acid-binding proteins"/>
    <property type="match status" value="1"/>
</dbReference>
<dbReference type="HAMAP" id="MF_00534">
    <property type="entry name" value="Asn_tRNA_synth"/>
    <property type="match status" value="1"/>
</dbReference>
<dbReference type="InterPro" id="IPR004364">
    <property type="entry name" value="Aa-tRNA-synt_II"/>
</dbReference>
<dbReference type="InterPro" id="IPR006195">
    <property type="entry name" value="aa-tRNA-synth_II"/>
</dbReference>
<dbReference type="InterPro" id="IPR045864">
    <property type="entry name" value="aa-tRNA-synth_II/BPL/LPL"/>
</dbReference>
<dbReference type="InterPro" id="IPR004522">
    <property type="entry name" value="Asn-tRNA-ligase"/>
</dbReference>
<dbReference type="InterPro" id="IPR002312">
    <property type="entry name" value="Asp/Asn-tRNA-synth_IIb"/>
</dbReference>
<dbReference type="InterPro" id="IPR012340">
    <property type="entry name" value="NA-bd_OB-fold"/>
</dbReference>
<dbReference type="InterPro" id="IPR004365">
    <property type="entry name" value="NA-bd_OB_tRNA"/>
</dbReference>
<dbReference type="NCBIfam" id="TIGR00457">
    <property type="entry name" value="asnS"/>
    <property type="match status" value="1"/>
</dbReference>
<dbReference type="NCBIfam" id="NF003037">
    <property type="entry name" value="PRK03932.1"/>
    <property type="match status" value="1"/>
</dbReference>
<dbReference type="NCBIfam" id="NF003483">
    <property type="entry name" value="PRK05159.1"/>
    <property type="match status" value="1"/>
</dbReference>
<dbReference type="PANTHER" id="PTHR22594:SF34">
    <property type="entry name" value="ASPARAGINE--TRNA LIGASE, MITOCHONDRIAL-RELATED"/>
    <property type="match status" value="1"/>
</dbReference>
<dbReference type="PANTHER" id="PTHR22594">
    <property type="entry name" value="ASPARTYL/LYSYL-TRNA SYNTHETASE"/>
    <property type="match status" value="1"/>
</dbReference>
<dbReference type="Pfam" id="PF00152">
    <property type="entry name" value="tRNA-synt_2"/>
    <property type="match status" value="1"/>
</dbReference>
<dbReference type="Pfam" id="PF01336">
    <property type="entry name" value="tRNA_anti-codon"/>
    <property type="match status" value="1"/>
</dbReference>
<dbReference type="PRINTS" id="PR01042">
    <property type="entry name" value="TRNASYNTHASP"/>
</dbReference>
<dbReference type="SUPFAM" id="SSF55681">
    <property type="entry name" value="Class II aaRS and biotin synthetases"/>
    <property type="match status" value="1"/>
</dbReference>
<dbReference type="SUPFAM" id="SSF50249">
    <property type="entry name" value="Nucleic acid-binding proteins"/>
    <property type="match status" value="1"/>
</dbReference>
<dbReference type="PROSITE" id="PS50862">
    <property type="entry name" value="AA_TRNA_LIGASE_II"/>
    <property type="match status" value="1"/>
</dbReference>
<feature type="chain" id="PRO_1000146482" description="Asparagine--tRNA ligase">
    <location>
        <begin position="1"/>
        <end position="440"/>
    </location>
</feature>
<accession>B9LCU8</accession>
<name>SYN_CHLSY</name>
<proteinExistence type="inferred from homology"/>
<evidence type="ECO:0000255" key="1">
    <source>
        <dbReference type="HAMAP-Rule" id="MF_00534"/>
    </source>
</evidence>
<organism>
    <name type="scientific">Chloroflexus aurantiacus (strain ATCC 29364 / DSM 637 / Y-400-fl)</name>
    <dbReference type="NCBI Taxonomy" id="480224"/>
    <lineage>
        <taxon>Bacteria</taxon>
        <taxon>Bacillati</taxon>
        <taxon>Chloroflexota</taxon>
        <taxon>Chloroflexia</taxon>
        <taxon>Chloroflexales</taxon>
        <taxon>Chloroflexineae</taxon>
        <taxon>Chloroflexaceae</taxon>
        <taxon>Chloroflexus</taxon>
    </lineage>
</organism>